<protein>
    <recommendedName>
        <fullName>Olfactory receptor 1F1</fullName>
    </recommendedName>
    <alternativeName>
        <fullName>Olfactory receptor 16-35</fullName>
        <shortName>OR16-35</shortName>
    </alternativeName>
    <alternativeName>
        <fullName>Olfactory receptor 1F10</fullName>
    </alternativeName>
    <alternativeName>
        <fullName>Olfactory receptor 1F4</fullName>
    </alternativeName>
    <alternativeName>
        <fullName>Olfactory receptor 1F5</fullName>
    </alternativeName>
    <alternativeName>
        <fullName>Olfactory receptor 1F6</fullName>
    </alternativeName>
    <alternativeName>
        <fullName>Olfactory receptor 1F7</fullName>
    </alternativeName>
    <alternativeName>
        <fullName>Olfactory receptor 1F8</fullName>
    </alternativeName>
    <alternativeName>
        <fullName>Olfactory receptor 1F9</fullName>
    </alternativeName>
    <alternativeName>
        <fullName>Olfactory receptor OR16-4</fullName>
    </alternativeName>
</protein>
<reference key="1">
    <citation type="journal article" date="1997" name="Nat. Genet.">
        <title>A candidate gene for familial Mediterranean fever.</title>
        <authorList>
            <person name="Bernot A."/>
            <person name="Clepet C."/>
            <person name="Dasilva C."/>
            <person name="Devaud C."/>
            <person name="Petit J.-L."/>
            <person name="Caloustian C."/>
            <person name="Cruaud C."/>
            <person name="Samson D."/>
            <person name="Pulcini F."/>
            <person name="Weissenbach J."/>
            <person name="Heilig R."/>
            <person name="Notanicola C."/>
            <person name="Domingo C."/>
            <person name="Rozenbaum M."/>
            <person name="Benchetrit E."/>
            <person name="Topaloglu R."/>
            <person name="Dewalle M."/>
            <person name="Dross C."/>
            <person name="Hadjari P."/>
            <person name="Dupont M."/>
            <person name="Demaille J.G."/>
            <person name="Touitou I."/>
            <person name="Smaoui N."/>
            <person name="Nedelec B."/>
            <person name="Mery J.-P."/>
            <person name="Chaabouni H."/>
            <person name="Delpech M."/>
            <person name="Grateau G."/>
        </authorList>
    </citation>
    <scope>NUCLEOTIDE SEQUENCE [MRNA]</scope>
</reference>
<reference key="2">
    <citation type="journal article" date="1998" name="Genomics">
        <title>A transcriptional map of the FMF region.</title>
        <authorList>
            <person name="Bernot A."/>
            <person name="Heilig R."/>
            <person name="Clepet C."/>
            <person name="Smaoui N."/>
            <person name="Da Silva C."/>
            <person name="Petit J.-L."/>
            <person name="Devaud C."/>
            <person name="Chiannilkulchai N."/>
            <person name="Fizames C."/>
            <person name="Samson D."/>
            <person name="Cruaud C."/>
            <person name="Caloustian C."/>
            <person name="Gyapay G."/>
            <person name="Delpech M."/>
            <person name="Weissenbach J."/>
        </authorList>
    </citation>
    <scope>NUCLEOTIDE SEQUENCE [GENOMIC DNA]</scope>
</reference>
<reference key="3">
    <citation type="submission" date="2001-07" db="EMBL/GenBank/DDBJ databases">
        <title>Genome-wide discovery and analysis of human seven transmembrane helix receptor genes.</title>
        <authorList>
            <person name="Suwa M."/>
            <person name="Sato T."/>
            <person name="Okouchi I."/>
            <person name="Arita M."/>
            <person name="Futami K."/>
            <person name="Matsumoto S."/>
            <person name="Tsutsumi S."/>
            <person name="Aburatani H."/>
            <person name="Asai K."/>
            <person name="Akiyama Y."/>
        </authorList>
    </citation>
    <scope>NUCLEOTIDE SEQUENCE [GENOMIC DNA]</scope>
</reference>
<reference key="4">
    <citation type="journal article" date="2004" name="Genome Res.">
        <title>The status, quality, and expansion of the NIH full-length cDNA project: the Mammalian Gene Collection (MGC).</title>
        <authorList>
            <consortium name="The MGC Project Team"/>
        </authorList>
    </citation>
    <scope>NUCLEOTIDE SEQUENCE [LARGE SCALE MRNA]</scope>
</reference>
<reference key="5">
    <citation type="journal article" date="1998" name="Nat. Genet.">
        <title>Distribution of olfactory receptor genes in the human genome.</title>
        <authorList>
            <person name="Rouquier S."/>
            <person name="Taviaux S."/>
            <person name="Trask B.J."/>
            <person name="Brand-Arpon V."/>
            <person name="Van den Engh G."/>
            <person name="Demaille J.G."/>
            <person name="Giorgi D."/>
        </authorList>
    </citation>
    <scope>NUCLEOTIDE SEQUENCE [GENOMIC DNA] OF 68-283</scope>
</reference>
<reference key="6">
    <citation type="journal article" date="2002" name="Genomics">
        <title>DEFOG: a practical scheme for deciphering families of genes.</title>
        <authorList>
            <person name="Fuchs T."/>
            <person name="Malecova B."/>
            <person name="Linhart C."/>
            <person name="Sharan R."/>
            <person name="Khen M."/>
            <person name="Herwig R."/>
            <person name="Shmulevich D."/>
            <person name="Elkon R."/>
            <person name="Steinfath M."/>
            <person name="O'Brien J.K."/>
            <person name="Radelof U."/>
            <person name="Lehrach H."/>
            <person name="Lancet D."/>
            <person name="Shamir R."/>
        </authorList>
    </citation>
    <scope>NUCLEOTIDE SEQUENCE [GENOMIC DNA] OF 68-283</scope>
</reference>
<reference key="7">
    <citation type="journal article" date="2004" name="Proc. Natl. Acad. Sci. U.S.A.">
        <title>The human olfactory receptor gene family.</title>
        <authorList>
            <person name="Malnic B."/>
            <person name="Godfrey P.A."/>
            <person name="Buck L.B."/>
        </authorList>
    </citation>
    <scope>IDENTIFICATION</scope>
</reference>
<reference key="8">
    <citation type="journal article" date="2004" name="Proc. Natl. Acad. Sci. U.S.A.">
        <authorList>
            <person name="Malnic B."/>
            <person name="Godfrey P.A."/>
            <person name="Buck L.B."/>
        </authorList>
    </citation>
    <scope>ERRATUM OF PUBMED:14983052</scope>
</reference>
<feature type="chain" id="PRO_0000150431" description="Olfactory receptor 1F1">
    <location>
        <begin position="1"/>
        <end position="312"/>
    </location>
</feature>
<feature type="topological domain" description="Extracellular" evidence="1">
    <location>
        <begin position="1"/>
        <end position="25"/>
    </location>
</feature>
<feature type="transmembrane region" description="Helical; Name=1" evidence="1">
    <location>
        <begin position="26"/>
        <end position="49"/>
    </location>
</feature>
<feature type="topological domain" description="Cytoplasmic" evidence="1">
    <location>
        <begin position="50"/>
        <end position="57"/>
    </location>
</feature>
<feature type="transmembrane region" description="Helical; Name=2" evidence="1">
    <location>
        <begin position="58"/>
        <end position="79"/>
    </location>
</feature>
<feature type="topological domain" description="Extracellular" evidence="1">
    <location>
        <begin position="80"/>
        <end position="100"/>
    </location>
</feature>
<feature type="transmembrane region" description="Helical; Name=3" evidence="1">
    <location>
        <begin position="101"/>
        <end position="120"/>
    </location>
</feature>
<feature type="topological domain" description="Cytoplasmic" evidence="1">
    <location>
        <begin position="121"/>
        <end position="139"/>
    </location>
</feature>
<feature type="transmembrane region" description="Helical; Name=4" evidence="1">
    <location>
        <begin position="140"/>
        <end position="158"/>
    </location>
</feature>
<feature type="topological domain" description="Extracellular" evidence="1">
    <location>
        <begin position="159"/>
        <end position="196"/>
    </location>
</feature>
<feature type="transmembrane region" description="Helical; Name=5" evidence="1">
    <location>
        <begin position="197"/>
        <end position="219"/>
    </location>
</feature>
<feature type="topological domain" description="Cytoplasmic" evidence="1">
    <location>
        <begin position="220"/>
        <end position="236"/>
    </location>
</feature>
<feature type="transmembrane region" description="Helical; Name=6" evidence="1">
    <location>
        <begin position="237"/>
        <end position="259"/>
    </location>
</feature>
<feature type="topological domain" description="Extracellular" evidence="1">
    <location>
        <begin position="260"/>
        <end position="272"/>
    </location>
</feature>
<feature type="transmembrane region" description="Helical; Name=7" evidence="1">
    <location>
        <begin position="273"/>
        <end position="292"/>
    </location>
</feature>
<feature type="topological domain" description="Cytoplasmic" evidence="1">
    <location>
        <begin position="293"/>
        <end position="312"/>
    </location>
</feature>
<feature type="glycosylation site" description="N-linked (GlcNAc...) asparagine" evidence="1">
    <location>
        <position position="5"/>
    </location>
</feature>
<feature type="disulfide bond" evidence="2">
    <location>
        <begin position="97"/>
        <end position="189"/>
    </location>
</feature>
<feature type="sequence variant" id="VAR_024086" description="In dbSNP:rs1834026.">
    <original>F</original>
    <variation>S</variation>
    <location>
        <position position="75"/>
    </location>
</feature>
<feature type="sequence variant" id="VAR_053121" description="In dbSNP:rs8045183.">
    <original>V</original>
    <variation>M</variation>
    <location>
        <position position="126"/>
    </location>
</feature>
<feature type="sequence conflict" description="In Ref. 1; CAA74794." evidence="3" ref="1">
    <original>D</original>
    <variation>N</variation>
    <location>
        <position position="191"/>
    </location>
</feature>
<feature type="sequence conflict" description="In Ref. 1; CAA74794." evidence="3" ref="1">
    <original>V</original>
    <variation>I</variation>
    <location>
        <position position="305"/>
    </location>
</feature>
<sequence length="312" mass="34866">MSGTNQSSVSEFLLLGLSRQPQQQHLLFVFFLSMYLATVLGNLLIILSVSIDSCLHTPMYFFLSNLSFVDICFSFTTVPKMLANHILETQTISFCGCLTQMYFVFMFVDMDNFLLAVMAYDHFVAVCHPLHYTAKMTHQLCALLVAGLWVVANLNVLLHTLLMAPLSFCADNAITHFFCDVTPLLKLSCSDTHLNEVIILSEGALVMITPFLCILASYMHITCTVLKVPSTKGRWKAFSTCGSHLAVVLLFYSTIIAVYFNPLSSHSAEKDTMATVLYTVVTPMLNPFIYSLRNRYLKGALKKVVGRVVFSV</sequence>
<evidence type="ECO:0000255" key="1"/>
<evidence type="ECO:0000255" key="2">
    <source>
        <dbReference type="PROSITE-ProRule" id="PRU00521"/>
    </source>
</evidence>
<evidence type="ECO:0000305" key="3"/>
<dbReference type="EMBL" id="Y14442">
    <property type="protein sequence ID" value="CAA74794.1"/>
    <property type="molecule type" value="mRNA"/>
</dbReference>
<dbReference type="EMBL" id="AJ003147">
    <property type="protein sequence ID" value="CAA05903.1"/>
    <property type="molecule type" value="Genomic_DNA"/>
</dbReference>
<dbReference type="EMBL" id="AB065907">
    <property type="protein sequence ID" value="BAC06122.1"/>
    <property type="molecule type" value="Genomic_DNA"/>
</dbReference>
<dbReference type="EMBL" id="BC069335">
    <property type="protein sequence ID" value="AAH69335.1"/>
    <property type="molecule type" value="mRNA"/>
</dbReference>
<dbReference type="EMBL" id="U86234">
    <property type="protein sequence ID" value="AAC39614.1"/>
    <property type="molecule type" value="Genomic_DNA"/>
</dbReference>
<dbReference type="EMBL" id="AF399559">
    <property type="protein sequence ID" value="AAK95044.1"/>
    <property type="molecule type" value="Genomic_DNA"/>
</dbReference>
<dbReference type="EMBL" id="BK004247">
    <property type="protein sequence ID" value="DAA04645.1"/>
    <property type="molecule type" value="Genomic_DNA"/>
</dbReference>
<dbReference type="CCDS" id="CCDS10496.1"/>
<dbReference type="RefSeq" id="NP_001357568.2">
    <property type="nucleotide sequence ID" value="NM_001370639.4"/>
</dbReference>
<dbReference type="RefSeq" id="NP_001357569.2">
    <property type="nucleotide sequence ID" value="NM_001370640.6"/>
</dbReference>
<dbReference type="RefSeq" id="NP_001357570.1">
    <property type="nucleotide sequence ID" value="NM_001370641.2"/>
</dbReference>
<dbReference type="RefSeq" id="NP_036492.1">
    <property type="nucleotide sequence ID" value="NM_012360.3"/>
</dbReference>
<dbReference type="RefSeq" id="XP_011520809.1">
    <property type="nucleotide sequence ID" value="XM_011522507.4"/>
</dbReference>
<dbReference type="RefSeq" id="XP_054236382.1">
    <property type="nucleotide sequence ID" value="XM_054380407.1"/>
</dbReference>
<dbReference type="SMR" id="O43749"/>
<dbReference type="FunCoup" id="O43749">
    <property type="interactions" value="546"/>
</dbReference>
<dbReference type="STRING" id="9606.ENSP00000305424"/>
<dbReference type="GlyCosmos" id="O43749">
    <property type="glycosylation" value="1 site, No reported glycans"/>
</dbReference>
<dbReference type="GlyGen" id="O43749">
    <property type="glycosylation" value="1 site"/>
</dbReference>
<dbReference type="PhosphoSitePlus" id="O43749"/>
<dbReference type="BioMuta" id="OR1F1"/>
<dbReference type="MassIVE" id="O43749"/>
<dbReference type="PaxDb" id="9606-ENSP00000305424"/>
<dbReference type="Antibodypedia" id="68201">
    <property type="antibodies" value="67 antibodies from 17 providers"/>
</dbReference>
<dbReference type="DNASU" id="4992"/>
<dbReference type="Ensembl" id="ENST00000304646.3">
    <property type="protein sequence ID" value="ENSP00000305424.2"/>
    <property type="gene ID" value="ENSG00000168124.3"/>
</dbReference>
<dbReference type="GeneID" id="4992"/>
<dbReference type="KEGG" id="hsa:4992"/>
<dbReference type="MANE-Select" id="ENST00000304646.3">
    <property type="protein sequence ID" value="ENSP00000305424.2"/>
    <property type="RefSeq nucleotide sequence ID" value="NM_001370640.6"/>
    <property type="RefSeq protein sequence ID" value="NP_001357569.2"/>
</dbReference>
<dbReference type="UCSC" id="uc010uwu.3">
    <property type="organism name" value="human"/>
</dbReference>
<dbReference type="AGR" id="HGNC:8194"/>
<dbReference type="CTD" id="4992"/>
<dbReference type="GeneCards" id="OR1F1"/>
<dbReference type="HGNC" id="HGNC:8194">
    <property type="gene designation" value="OR1F1"/>
</dbReference>
<dbReference type="HPA" id="ENSG00000168124">
    <property type="expression patterns" value="Tissue enriched (brain)"/>
</dbReference>
<dbReference type="MIM" id="603232">
    <property type="type" value="gene"/>
</dbReference>
<dbReference type="neXtProt" id="NX_O43749"/>
<dbReference type="OpenTargets" id="ENSG00000168124"/>
<dbReference type="PharmGKB" id="PA32070"/>
<dbReference type="VEuPathDB" id="HostDB:ENSG00000168124"/>
<dbReference type="eggNOG" id="ENOG502RTWB">
    <property type="taxonomic scope" value="Eukaryota"/>
</dbReference>
<dbReference type="GeneTree" id="ENSGT00940000153683"/>
<dbReference type="HOGENOM" id="CLU_012526_1_3_1"/>
<dbReference type="InParanoid" id="O43749"/>
<dbReference type="OMA" id="MITPFLC"/>
<dbReference type="OrthoDB" id="9444602at2759"/>
<dbReference type="PAN-GO" id="O43749">
    <property type="GO annotations" value="3 GO annotations based on evolutionary models"/>
</dbReference>
<dbReference type="PhylomeDB" id="O43749"/>
<dbReference type="TreeFam" id="TF337210"/>
<dbReference type="PathwayCommons" id="O43749"/>
<dbReference type="Reactome" id="R-HSA-9752946">
    <property type="pathway name" value="Expression and translocation of olfactory receptors"/>
</dbReference>
<dbReference type="BioGRID-ORCS" id="4992">
    <property type="hits" value="9 hits in 750 CRISPR screens"/>
</dbReference>
<dbReference type="ChiTaRS" id="OR1F1">
    <property type="organism name" value="human"/>
</dbReference>
<dbReference type="GeneWiki" id="OR1F1"/>
<dbReference type="GenomeRNAi" id="4992"/>
<dbReference type="Pharos" id="O43749">
    <property type="development level" value="Tdark"/>
</dbReference>
<dbReference type="PRO" id="PR:O43749"/>
<dbReference type="Proteomes" id="UP000005640">
    <property type="component" value="Chromosome 16"/>
</dbReference>
<dbReference type="RNAct" id="O43749">
    <property type="molecule type" value="protein"/>
</dbReference>
<dbReference type="Bgee" id="ENSG00000168124">
    <property type="expression patterns" value="Expressed in tibialis anterior and 32 other cell types or tissues"/>
</dbReference>
<dbReference type="GO" id="GO:0005886">
    <property type="term" value="C:plasma membrane"/>
    <property type="evidence" value="ECO:0000318"/>
    <property type="project" value="GO_Central"/>
</dbReference>
<dbReference type="GO" id="GO:0004930">
    <property type="term" value="F:G protein-coupled receptor activity"/>
    <property type="evidence" value="ECO:0007669"/>
    <property type="project" value="UniProtKB-KW"/>
</dbReference>
<dbReference type="GO" id="GO:0004984">
    <property type="term" value="F:olfactory receptor activity"/>
    <property type="evidence" value="ECO:0000318"/>
    <property type="project" value="GO_Central"/>
</dbReference>
<dbReference type="GO" id="GO:0007165">
    <property type="term" value="P:signal transduction"/>
    <property type="evidence" value="ECO:0000318"/>
    <property type="project" value="GO_Central"/>
</dbReference>
<dbReference type="CDD" id="cd15918">
    <property type="entry name" value="7tmA_OR1_7-like"/>
    <property type="match status" value="1"/>
</dbReference>
<dbReference type="FunFam" id="1.20.1070.10:FF:000009">
    <property type="entry name" value="Olfactory receptor"/>
    <property type="match status" value="1"/>
</dbReference>
<dbReference type="Gene3D" id="1.20.1070.10">
    <property type="entry name" value="Rhodopsin 7-helix transmembrane proteins"/>
    <property type="match status" value="1"/>
</dbReference>
<dbReference type="InterPro" id="IPR000276">
    <property type="entry name" value="GPCR_Rhodpsn"/>
</dbReference>
<dbReference type="InterPro" id="IPR017452">
    <property type="entry name" value="GPCR_Rhodpsn_7TM"/>
</dbReference>
<dbReference type="InterPro" id="IPR000725">
    <property type="entry name" value="Olfact_rcpt"/>
</dbReference>
<dbReference type="PANTHER" id="PTHR48001">
    <property type="entry name" value="OLFACTORY RECEPTOR"/>
    <property type="match status" value="1"/>
</dbReference>
<dbReference type="Pfam" id="PF13853">
    <property type="entry name" value="7tm_4"/>
    <property type="match status" value="1"/>
</dbReference>
<dbReference type="PRINTS" id="PR00237">
    <property type="entry name" value="GPCRRHODOPSN"/>
</dbReference>
<dbReference type="PRINTS" id="PR00245">
    <property type="entry name" value="OLFACTORYR"/>
</dbReference>
<dbReference type="SUPFAM" id="SSF81321">
    <property type="entry name" value="Family A G protein-coupled receptor-like"/>
    <property type="match status" value="1"/>
</dbReference>
<dbReference type="PROSITE" id="PS50262">
    <property type="entry name" value="G_PROTEIN_RECEP_F1_2"/>
    <property type="match status" value="1"/>
</dbReference>
<keyword id="KW-1003">Cell membrane</keyword>
<keyword id="KW-1015">Disulfide bond</keyword>
<keyword id="KW-0297">G-protein coupled receptor</keyword>
<keyword id="KW-0325">Glycoprotein</keyword>
<keyword id="KW-0472">Membrane</keyword>
<keyword id="KW-0552">Olfaction</keyword>
<keyword id="KW-0675">Receptor</keyword>
<keyword id="KW-1185">Reference proteome</keyword>
<keyword id="KW-0716">Sensory transduction</keyword>
<keyword id="KW-0807">Transducer</keyword>
<keyword id="KW-0812">Transmembrane</keyword>
<keyword id="KW-1133">Transmembrane helix</keyword>
<name>OR1F1_HUMAN</name>
<proteinExistence type="evidence at transcript level"/>
<gene>
    <name type="primary">OR1F1</name>
    <name type="synonym">OLFMF</name>
    <name type="synonym">OR1F10</name>
    <name type="synonym">OR1F4</name>
    <name type="synonym">OR1F5</name>
    <name type="synonym">OR1F6</name>
    <name type="synonym">OR1F7</name>
    <name type="synonym">OR1F8</name>
    <name type="synonym">OR1F9</name>
</gene>
<organism>
    <name type="scientific">Homo sapiens</name>
    <name type="common">Human</name>
    <dbReference type="NCBI Taxonomy" id="9606"/>
    <lineage>
        <taxon>Eukaryota</taxon>
        <taxon>Metazoa</taxon>
        <taxon>Chordata</taxon>
        <taxon>Craniata</taxon>
        <taxon>Vertebrata</taxon>
        <taxon>Euteleostomi</taxon>
        <taxon>Mammalia</taxon>
        <taxon>Eutheria</taxon>
        <taxon>Euarchontoglires</taxon>
        <taxon>Primates</taxon>
        <taxon>Haplorrhini</taxon>
        <taxon>Catarrhini</taxon>
        <taxon>Hominidae</taxon>
        <taxon>Homo</taxon>
    </lineage>
</organism>
<comment type="function">
    <text evidence="3">Odorant receptor.</text>
</comment>
<comment type="subcellular location">
    <subcellularLocation>
        <location>Cell membrane</location>
        <topology>Multi-pass membrane protein</topology>
    </subcellularLocation>
</comment>
<comment type="similarity">
    <text evidence="2">Belongs to the G-protein coupled receptor 1 family.</text>
</comment>
<comment type="online information" name="Human Olfactory Receptor Data Exploratorium (HORDE)">
    <link uri="http://genome.weizmann.ac.il/horde/card/index/symbol:OR1F1"/>
</comment>
<accession>O43749</accession>
<accession>O15246</accession>
<accession>Q6IFL5</accession>